<gene>
    <name evidence="3" type="primary">ATR39-2</name>
</gene>
<evidence type="ECO:0000255" key="1"/>
<evidence type="ECO:0000269" key="2">
    <source>
    </source>
</evidence>
<evidence type="ECO:0000303" key="3">
    <source>
    </source>
</evidence>
<evidence type="ECO:0000305" key="4"/>
<evidence type="ECO:0000305" key="5">
    <source>
    </source>
</evidence>
<comment type="function">
    <text evidence="2">Secreted effector that acts as an elicitor of hypersensitive response (HR) specifically on plants carrying defense protein RPP39 (PubMed:22359513). The allele ATR39-1 is recognized by RPP39, whereas the ATR39-2 allele is nor recognized (PubMed:22359513).</text>
</comment>
<comment type="subcellular location">
    <subcellularLocation>
        <location evidence="5">Secreted</location>
    </subcellularLocation>
    <subcellularLocation>
        <location evidence="5">Host cell</location>
    </subcellularLocation>
</comment>
<comment type="domain">
    <text evidence="5">The RxLR-dEER motif acts to carry the protein into the host cell cytoplasm through binding to cell surface phosphatidylinositol-3-phosphate.</text>
</comment>
<comment type="miscellaneous">
    <text evidence="2">ATR39 has 2 polymorphic alleles that are highly conserved among Hyaloperonospora arabidopsidis isolate. This conservation is in stark contrast with other characterized H.arabidopsidis effectors ATR1, ATR5 and ATR13, which are highly divergent. The presence of amino acids Glu-168 and Val-169 in ATR39-2 blocks recognition by host defense protein RPP39.</text>
</comment>
<comment type="similarity">
    <text evidence="4">Belongs to the RxLR effector family.</text>
</comment>
<name>AT392_HYAAE</name>
<protein>
    <recommendedName>
        <fullName evidence="3">Avirulence protein ATR39-2</fullName>
    </recommendedName>
    <alternativeName>
        <fullName evidence="3">Arabidopsis thaliana recognized protein 39-2</fullName>
    </alternativeName>
</protein>
<sequence length="187" mass="20405">MVKCTPLLALTVIVSAGSDALSDPTVKRLAKLATINQAPATQSNSDSKRVLRASDVPNEVAAGESRSPKSLWPWEVEDKLAPLKEKLISTSADDLEAGGSAKKNALPMTWRWLWQNQIETKKTPIDEISKEVQTAMDLISSKATHEELNKAGVSVSDYVKALKLTLPEVDVDVVNRGMEYNIHLGNK</sequence>
<reference key="1">
    <citation type="journal article" date="2010" name="Science">
        <title>Signatures of adaptation to obligate biotrophy in the Hyaloperonospora arabidopsidis genome.</title>
        <authorList>
            <person name="Baxter L."/>
            <person name="Tripathy S."/>
            <person name="Ishaque N."/>
            <person name="Boot N."/>
            <person name="Cabral A."/>
            <person name="Kemen E."/>
            <person name="Thines M."/>
            <person name="Ah-Fong A."/>
            <person name="Anderson R."/>
            <person name="Badejoko W."/>
            <person name="Bittner-Eddy P."/>
            <person name="Boore J.L."/>
            <person name="Chibucos M.C."/>
            <person name="Coates M."/>
            <person name="Dehal P."/>
            <person name="Delehaunty K."/>
            <person name="Dong S."/>
            <person name="Downton P."/>
            <person name="Dumas B."/>
            <person name="Fabro G."/>
            <person name="Fronick C."/>
            <person name="Fuerstenberg S.I."/>
            <person name="Fulton L."/>
            <person name="Gaulin E."/>
            <person name="Govers F."/>
            <person name="Hughes L."/>
            <person name="Humphray S."/>
            <person name="Jiang R.H."/>
            <person name="Judelson H."/>
            <person name="Kamoun S."/>
            <person name="Kyung K."/>
            <person name="Meijer H."/>
            <person name="Minx P."/>
            <person name="Morris P."/>
            <person name="Nelson J."/>
            <person name="Phuntumart V."/>
            <person name="Qutob D."/>
            <person name="Rehmany A."/>
            <person name="Rougon-Cardoso A."/>
            <person name="Ryden P."/>
            <person name="Torto-Alalibo T."/>
            <person name="Studholme D."/>
            <person name="Wang Y."/>
            <person name="Win J."/>
            <person name="Wood J."/>
            <person name="Clifton S.W."/>
            <person name="Rogers J."/>
            <person name="Van den Ackerveken G."/>
            <person name="Jones J.D."/>
            <person name="McDowell J.M."/>
            <person name="Beynon J."/>
            <person name="Tyler B.M."/>
        </authorList>
    </citation>
    <scope>NUCLEOTIDE SEQUENCE [LARGE SCALE GENOMIC DNA]</scope>
    <source>
        <strain>Emoy2</strain>
    </source>
</reference>
<reference key="2">
    <citation type="submission" date="2015-06" db="UniProtKB">
        <authorList>
            <consortium name="EnsemblProtists"/>
        </authorList>
    </citation>
    <scope>IDENTIFICATION</scope>
    <source>
        <strain>Emoy2</strain>
    </source>
</reference>
<reference key="3">
    <citation type="journal article" date="2012" name="PLoS Genet.">
        <title>Computational prediction and molecular characterization of an oomycete effector and the cognate Arabidopsis resistance gene.</title>
        <authorList>
            <person name="Goritschnig S."/>
            <person name="Krasileva K.V."/>
            <person name="Dahlbeck D."/>
            <person name="Staskawicz B.J."/>
        </authorList>
    </citation>
    <scope>FUNCTION</scope>
    <scope>MUTAGENESIS OF 168-GLU-VAL-169</scope>
</reference>
<feature type="signal peptide" evidence="1">
    <location>
        <begin position="1"/>
        <end position="20"/>
    </location>
</feature>
<feature type="chain" id="PRO_5004048953" description="Avirulence protein ATR39-2">
    <location>
        <begin position="21"/>
        <end position="187"/>
    </location>
</feature>
<feature type="short sequence motif" description="RxLR-dEER" evidence="5">
    <location>
        <begin position="49"/>
        <end position="66"/>
    </location>
</feature>
<feature type="mutagenesis site" description="Results in a gain of recognition by host defense protein RPP39." evidence="2">
    <location>
        <begin position="168"/>
        <end position="169"/>
    </location>
</feature>
<accession>M4BUU2</accession>
<dbReference type="EMBL" id="JH597954">
    <property type="status" value="NOT_ANNOTATED_CDS"/>
    <property type="molecule type" value="Genomic_DNA"/>
</dbReference>
<dbReference type="EnsemblProtists" id="HpaT810281">
    <property type="protein sequence ID" value="HpaP810281"/>
    <property type="gene ID" value="HpaG810281"/>
</dbReference>
<dbReference type="VEuPathDB" id="FungiDB:HpaG810281"/>
<dbReference type="HOGENOM" id="CLU_1450268_0_0_1"/>
<dbReference type="InParanoid" id="M4BUU2"/>
<dbReference type="Proteomes" id="UP000011713">
    <property type="component" value="Unassembled WGS sequence"/>
</dbReference>
<dbReference type="GO" id="GO:0005576">
    <property type="term" value="C:extracellular region"/>
    <property type="evidence" value="ECO:0007669"/>
    <property type="project" value="UniProtKB-SubCell"/>
</dbReference>
<dbReference type="GO" id="GO:0043657">
    <property type="term" value="C:host cell"/>
    <property type="evidence" value="ECO:0007669"/>
    <property type="project" value="UniProtKB-SubCell"/>
</dbReference>
<proteinExistence type="evidence at protein level"/>
<organism>
    <name type="scientific">Hyaloperonospora arabidopsidis (strain Emoy2)</name>
    <name type="common">Downy mildew agent</name>
    <name type="synonym">Peronospora arabidopsidis</name>
    <dbReference type="NCBI Taxonomy" id="559515"/>
    <lineage>
        <taxon>Eukaryota</taxon>
        <taxon>Sar</taxon>
        <taxon>Stramenopiles</taxon>
        <taxon>Oomycota</taxon>
        <taxon>Peronosporales</taxon>
        <taxon>Peronosporaceae</taxon>
        <taxon>Hyaloperonospora</taxon>
    </lineage>
</organism>
<keyword id="KW-1185">Reference proteome</keyword>
<keyword id="KW-0964">Secreted</keyword>
<keyword id="KW-0732">Signal</keyword>
<keyword id="KW-0843">Virulence</keyword>